<gene>
    <name type="primary">Tusc2</name>
    <name type="synonym">Fus1</name>
    <name type="synonym">Lgcc</name>
    <name type="synonym">Pdap2</name>
</gene>
<proteinExistence type="evidence at protein level"/>
<sequence length="110" mass="12136">MGASGSKARGLWPFASTPGGGGPEAAGSEQSLVRSRARAVPPFVFTRRGSMFYDEDGDLAHEFYEETIVTKNGQKRAKLRRVHKNLIPQGIVKLDPPRIHVDFPVILYEV</sequence>
<reference key="1">
    <citation type="submission" date="1999-01" db="EMBL/GenBank/DDBJ databases">
        <title>Mouse ortholog of the human Fus1 gene.</title>
        <authorList>
            <person name="Duh F.-M."/>
            <person name="Minna J.D."/>
            <person name="Lerman M.I."/>
        </authorList>
    </citation>
    <scope>NUCLEOTIDE SEQUENCE [MRNA]</scope>
    <source>
        <strain>C57BL/6J</strain>
    </source>
</reference>
<reference key="2">
    <citation type="journal article" date="2004" name="Genome Res.">
        <title>The status, quality, and expansion of the NIH full-length cDNA project: the Mammalian Gene Collection (MGC).</title>
        <authorList>
            <consortium name="The MGC Project Team"/>
        </authorList>
    </citation>
    <scope>NUCLEOTIDE SEQUENCE [LARGE SCALE MRNA]</scope>
    <source>
        <tissue>Testis</tissue>
    </source>
</reference>
<reference key="3">
    <citation type="journal article" date="2007" name="Proc. Natl. Acad. Sci. U.S.A.">
        <title>Large-scale phosphorylation analysis of mouse liver.</title>
        <authorList>
            <person name="Villen J."/>
            <person name="Beausoleil S.A."/>
            <person name="Gerber S.A."/>
            <person name="Gygi S.P."/>
        </authorList>
    </citation>
    <scope>PHOSPHORYLATION [LARGE SCALE ANALYSIS] AT SER-50</scope>
    <scope>IDENTIFICATION BY MASS SPECTROMETRY [LARGE SCALE ANALYSIS]</scope>
    <source>
        <tissue>Liver</tissue>
    </source>
</reference>
<reference key="4">
    <citation type="journal article" date="2010" name="Cell">
        <title>A tissue-specific atlas of mouse protein phosphorylation and expression.</title>
        <authorList>
            <person name="Huttlin E.L."/>
            <person name="Jedrychowski M.P."/>
            <person name="Elias J.E."/>
            <person name="Goswami T."/>
            <person name="Rad R."/>
            <person name="Beausoleil S.A."/>
            <person name="Villen J."/>
            <person name="Haas W."/>
            <person name="Sowa M.E."/>
            <person name="Gygi S.P."/>
        </authorList>
    </citation>
    <scope>PHOSPHORYLATION [LARGE SCALE ANALYSIS] AT SER-50</scope>
    <scope>IDENTIFICATION BY MASS SPECTROMETRY [LARGE SCALE ANALYSIS]</scope>
    <source>
        <tissue>Brain</tissue>
        <tissue>Brown adipose tissue</tissue>
        <tissue>Kidney</tissue>
        <tissue>Liver</tissue>
        <tissue>Lung</tissue>
        <tissue>Pancreas</tissue>
        <tissue>Spleen</tissue>
        <tissue>Testis</tissue>
    </source>
</reference>
<comment type="PTM">
    <text evidence="1">Myristoylation is required for tumor suppressor activity.</text>
</comment>
<comment type="similarity">
    <text evidence="4">Belongs to the TUSC2 family.</text>
</comment>
<feature type="initiator methionine" description="Removed" evidence="2">
    <location>
        <position position="1"/>
    </location>
</feature>
<feature type="chain" id="PRO_0000148171" description="Tumor suppressor candidate 2">
    <location>
        <begin position="2"/>
        <end position="110"/>
    </location>
</feature>
<feature type="region of interest" description="Disordered" evidence="3">
    <location>
        <begin position="1"/>
        <end position="33"/>
    </location>
</feature>
<feature type="modified residue" description="Phosphoserine" evidence="5 6">
    <location>
        <position position="50"/>
    </location>
</feature>
<feature type="lipid moiety-binding region" description="N-myristoyl glycine" evidence="1">
    <location>
        <position position="2"/>
    </location>
</feature>
<name>TUSC2_MOUSE</name>
<protein>
    <recommendedName>
        <fullName>Tumor suppressor candidate 2</fullName>
    </recommendedName>
    <alternativeName>
        <fullName>Fusion 1 protein</fullName>
        <shortName>Fus-1 protein</shortName>
    </alternativeName>
    <alternativeName>
        <fullName>PDGFA-associated protein 2</fullName>
    </alternativeName>
</protein>
<dbReference type="EMBL" id="AF123387">
    <property type="protein sequence ID" value="AAD42286.1"/>
    <property type="molecule type" value="mRNA"/>
</dbReference>
<dbReference type="EMBL" id="BC048477">
    <property type="protein sequence ID" value="AAH48477.1"/>
    <property type="molecule type" value="mRNA"/>
</dbReference>
<dbReference type="CCDS" id="CCDS23495.1"/>
<dbReference type="RefSeq" id="NP_062716.1">
    <property type="nucleotide sequence ID" value="NM_019742.4"/>
</dbReference>
<dbReference type="FunCoup" id="Q9WVF8">
    <property type="interactions" value="1589"/>
</dbReference>
<dbReference type="STRING" id="10090.ENSMUSP00000010198"/>
<dbReference type="GlyGen" id="Q9WVF8">
    <property type="glycosylation" value="1 site"/>
</dbReference>
<dbReference type="iPTMnet" id="Q9WVF8"/>
<dbReference type="PhosphoSitePlus" id="Q9WVF8"/>
<dbReference type="PaxDb" id="10090-ENSMUSP00000010198"/>
<dbReference type="ProteomicsDB" id="298030"/>
<dbReference type="Antibodypedia" id="30895">
    <property type="antibodies" value="195 antibodies from 30 providers"/>
</dbReference>
<dbReference type="DNASU" id="80385"/>
<dbReference type="Ensembl" id="ENSMUST00000010198.5">
    <property type="protein sequence ID" value="ENSMUSP00000010198.4"/>
    <property type="gene ID" value="ENSMUSG00000010054.5"/>
</dbReference>
<dbReference type="GeneID" id="80385"/>
<dbReference type="KEGG" id="mmu:80385"/>
<dbReference type="UCSC" id="uc009rls.1">
    <property type="organism name" value="mouse"/>
</dbReference>
<dbReference type="AGR" id="MGI:1931086"/>
<dbReference type="CTD" id="11334"/>
<dbReference type="MGI" id="MGI:1931086">
    <property type="gene designation" value="Tusc2"/>
</dbReference>
<dbReference type="VEuPathDB" id="HostDB:ENSMUSG00000010054"/>
<dbReference type="eggNOG" id="ENOG502S21H">
    <property type="taxonomic scope" value="Eukaryota"/>
</dbReference>
<dbReference type="GeneTree" id="ENSGT00390000008040"/>
<dbReference type="HOGENOM" id="CLU_152285_0_0_1"/>
<dbReference type="InParanoid" id="Q9WVF8"/>
<dbReference type="OMA" id="DTPRIHV"/>
<dbReference type="OrthoDB" id="9025707at2759"/>
<dbReference type="PhylomeDB" id="Q9WVF8"/>
<dbReference type="TreeFam" id="TF314634"/>
<dbReference type="BioGRID-ORCS" id="80385">
    <property type="hits" value="4 hits in 77 CRISPR screens"/>
</dbReference>
<dbReference type="ChiTaRS" id="Tusc2">
    <property type="organism name" value="mouse"/>
</dbReference>
<dbReference type="PRO" id="PR:Q9WVF8"/>
<dbReference type="Proteomes" id="UP000000589">
    <property type="component" value="Chromosome 9"/>
</dbReference>
<dbReference type="RNAct" id="Q9WVF8">
    <property type="molecule type" value="protein"/>
</dbReference>
<dbReference type="Bgee" id="ENSMUSG00000010054">
    <property type="expression patterns" value="Expressed in right kidney and 233 other cell types or tissues"/>
</dbReference>
<dbReference type="ExpressionAtlas" id="Q9WVF8">
    <property type="expression patterns" value="baseline and differential"/>
</dbReference>
<dbReference type="GO" id="GO:0005739">
    <property type="term" value="C:mitochondrion"/>
    <property type="evidence" value="ECO:0000314"/>
    <property type="project" value="MGI"/>
</dbReference>
<dbReference type="GO" id="GO:0048469">
    <property type="term" value="P:cell maturation"/>
    <property type="evidence" value="ECO:0000315"/>
    <property type="project" value="MGI"/>
</dbReference>
<dbReference type="GO" id="GO:0050829">
    <property type="term" value="P:defense response to Gram-negative bacterium"/>
    <property type="evidence" value="ECO:0000315"/>
    <property type="project" value="MGI"/>
</dbReference>
<dbReference type="GO" id="GO:0006954">
    <property type="term" value="P:inflammatory response"/>
    <property type="evidence" value="ECO:0000315"/>
    <property type="project" value="MGI"/>
</dbReference>
<dbReference type="GO" id="GO:0001779">
    <property type="term" value="P:natural killer cell differentiation"/>
    <property type="evidence" value="ECO:0000315"/>
    <property type="project" value="MGI"/>
</dbReference>
<dbReference type="GO" id="GO:0032700">
    <property type="term" value="P:negative regulation of interleukin-17 production"/>
    <property type="evidence" value="ECO:0000315"/>
    <property type="project" value="MGI"/>
</dbReference>
<dbReference type="GO" id="GO:0070945">
    <property type="term" value="P:neutrophil-mediated killing of gram-negative bacterium"/>
    <property type="evidence" value="ECO:0000315"/>
    <property type="project" value="MGI"/>
</dbReference>
<dbReference type="GO" id="GO:0006909">
    <property type="term" value="P:phagocytosis"/>
    <property type="evidence" value="ECO:0000315"/>
    <property type="project" value="MGI"/>
</dbReference>
<dbReference type="GO" id="GO:0032733">
    <property type="term" value="P:positive regulation of interleukin-10 production"/>
    <property type="evidence" value="ECO:0000315"/>
    <property type="project" value="MGI"/>
</dbReference>
<dbReference type="GO" id="GO:0051881">
    <property type="term" value="P:regulation of mitochondrial membrane potential"/>
    <property type="evidence" value="ECO:0000315"/>
    <property type="project" value="MGI"/>
</dbReference>
<dbReference type="GO" id="GO:2000377">
    <property type="term" value="P:regulation of reactive oxygen species metabolic process"/>
    <property type="evidence" value="ECO:0000315"/>
    <property type="project" value="MGI"/>
</dbReference>
<dbReference type="InterPro" id="IPR029393">
    <property type="entry name" value="FUS1"/>
</dbReference>
<dbReference type="PANTHER" id="PTHR15453">
    <property type="entry name" value="TUMOR SUPPRESSOR CANDIDATE 2"/>
    <property type="match status" value="1"/>
</dbReference>
<dbReference type="PANTHER" id="PTHR15453:SF8">
    <property type="entry name" value="TUMOR SUPPRESSOR CANDIDATE 2"/>
    <property type="match status" value="1"/>
</dbReference>
<dbReference type="Pfam" id="PF15000">
    <property type="entry name" value="TUSC2"/>
    <property type="match status" value="1"/>
</dbReference>
<organism>
    <name type="scientific">Mus musculus</name>
    <name type="common">Mouse</name>
    <dbReference type="NCBI Taxonomy" id="10090"/>
    <lineage>
        <taxon>Eukaryota</taxon>
        <taxon>Metazoa</taxon>
        <taxon>Chordata</taxon>
        <taxon>Craniata</taxon>
        <taxon>Vertebrata</taxon>
        <taxon>Euteleostomi</taxon>
        <taxon>Mammalia</taxon>
        <taxon>Eutheria</taxon>
        <taxon>Euarchontoglires</taxon>
        <taxon>Glires</taxon>
        <taxon>Rodentia</taxon>
        <taxon>Myomorpha</taxon>
        <taxon>Muroidea</taxon>
        <taxon>Muridae</taxon>
        <taxon>Murinae</taxon>
        <taxon>Mus</taxon>
        <taxon>Mus</taxon>
    </lineage>
</organism>
<keyword id="KW-0449">Lipoprotein</keyword>
<keyword id="KW-0519">Myristate</keyword>
<keyword id="KW-0597">Phosphoprotein</keyword>
<keyword id="KW-1185">Reference proteome</keyword>
<evidence type="ECO:0000250" key="1"/>
<evidence type="ECO:0000250" key="2">
    <source>
        <dbReference type="UniProtKB" id="O75896"/>
    </source>
</evidence>
<evidence type="ECO:0000256" key="3">
    <source>
        <dbReference type="SAM" id="MobiDB-lite"/>
    </source>
</evidence>
<evidence type="ECO:0000305" key="4"/>
<evidence type="ECO:0007744" key="5">
    <source>
    </source>
</evidence>
<evidence type="ECO:0007744" key="6">
    <source>
    </source>
</evidence>
<accession>Q9WVF8</accession>